<evidence type="ECO:0000255" key="1">
    <source>
        <dbReference type="HAMAP-Rule" id="MF_00444"/>
    </source>
</evidence>
<comment type="function">
    <text evidence="1">Cleaves peptides in various proteins in a process that requires ATP hydrolysis. Has a chymotrypsin-like activity. Plays a major role in the degradation of misfolded proteins.</text>
</comment>
<comment type="catalytic activity">
    <reaction evidence="1">
        <text>Hydrolysis of proteins to small peptides in the presence of ATP and magnesium. alpha-casein is the usual test substrate. In the absence of ATP, only oligopeptides shorter than five residues are hydrolyzed (such as succinyl-Leu-Tyr-|-NHMec, and Leu-Tyr-Leu-|-Tyr-Trp, in which cleavage of the -Tyr-|-Leu- and -Tyr-|-Trp bonds also occurs).</text>
        <dbReference type="EC" id="3.4.21.92"/>
    </reaction>
</comment>
<comment type="subunit">
    <text evidence="1">Fourteen ClpP subunits assemble into 2 heptameric rings which stack back to back to give a disk-like structure with a central cavity, resembling the structure of eukaryotic proteasomes.</text>
</comment>
<comment type="subcellular location">
    <subcellularLocation>
        <location evidence="1">Cytoplasm</location>
    </subcellularLocation>
</comment>
<comment type="similarity">
    <text evidence="1">Belongs to the peptidase S14 family.</text>
</comment>
<reference key="1">
    <citation type="journal article" date="2003" name="Nucleic Acids Res.">
        <title>Genome sequence of Chlamydophila caviae (Chlamydia psittaci GPIC): examining the role of niche-specific genes in the evolution of the Chlamydiaceae.</title>
        <authorList>
            <person name="Read T.D."/>
            <person name="Myers G.S.A."/>
            <person name="Brunham R.C."/>
            <person name="Nelson W.C."/>
            <person name="Paulsen I.T."/>
            <person name="Heidelberg J.F."/>
            <person name="Holtzapple E.K."/>
            <person name="Khouri H.M."/>
            <person name="Federova N.B."/>
            <person name="Carty H.A."/>
            <person name="Umayam L.A."/>
            <person name="Haft D.H."/>
            <person name="Peterson J.D."/>
            <person name="Beanan M.J."/>
            <person name="White O."/>
            <person name="Salzberg S.L."/>
            <person name="Hsia R.-C."/>
            <person name="McClarty G."/>
            <person name="Rank R.G."/>
            <person name="Bavoil P.M."/>
            <person name="Fraser C.M."/>
        </authorList>
    </citation>
    <scope>NUCLEOTIDE SEQUENCE [LARGE SCALE GENOMIC DNA]</scope>
    <source>
        <strain>ATCC VR-813 / DSM 19441 / 03DC25 / GPIC</strain>
    </source>
</reference>
<keyword id="KW-0963">Cytoplasm</keyword>
<keyword id="KW-0378">Hydrolase</keyword>
<keyword id="KW-0645">Protease</keyword>
<keyword id="KW-0720">Serine protease</keyword>
<organism>
    <name type="scientific">Chlamydia caviae (strain ATCC VR-813 / DSM 19441 / 03DC25 / GPIC)</name>
    <name type="common">Chlamydophila caviae</name>
    <dbReference type="NCBI Taxonomy" id="227941"/>
    <lineage>
        <taxon>Bacteria</taxon>
        <taxon>Pseudomonadati</taxon>
        <taxon>Chlamydiota</taxon>
        <taxon>Chlamydiia</taxon>
        <taxon>Chlamydiales</taxon>
        <taxon>Chlamydiaceae</taxon>
        <taxon>Chlamydia/Chlamydophila group</taxon>
        <taxon>Chlamydia</taxon>
    </lineage>
</organism>
<proteinExistence type="inferred from homology"/>
<accession>Q824C7</accession>
<gene>
    <name evidence="1" type="primary">clpP1</name>
    <name type="ordered locus">CCA_00225</name>
</gene>
<feature type="chain" id="PRO_0000179528" description="ATP-dependent Clp protease proteolytic subunit 1">
    <location>
        <begin position="1"/>
        <end position="191"/>
    </location>
</feature>
<feature type="active site" description="Nucleophile" evidence="1">
    <location>
        <position position="91"/>
    </location>
</feature>
<feature type="active site" evidence="1">
    <location>
        <position position="116"/>
    </location>
</feature>
<name>CLPP1_CHLCV</name>
<dbReference type="EC" id="3.4.21.92" evidence="1"/>
<dbReference type="EMBL" id="AE015925">
    <property type="protein sequence ID" value="AAP04976.1"/>
    <property type="molecule type" value="Genomic_DNA"/>
</dbReference>
<dbReference type="RefSeq" id="WP_011006194.1">
    <property type="nucleotide sequence ID" value="NC_003361.3"/>
</dbReference>
<dbReference type="SMR" id="Q824C7"/>
<dbReference type="STRING" id="227941.CCA_00225"/>
<dbReference type="MEROPS" id="S14.005"/>
<dbReference type="KEGG" id="cca:CCA_00225"/>
<dbReference type="eggNOG" id="COG0740">
    <property type="taxonomic scope" value="Bacteria"/>
</dbReference>
<dbReference type="HOGENOM" id="CLU_058707_4_0_0"/>
<dbReference type="OrthoDB" id="20499at2"/>
<dbReference type="Proteomes" id="UP000002193">
    <property type="component" value="Chromosome"/>
</dbReference>
<dbReference type="GO" id="GO:0005737">
    <property type="term" value="C:cytoplasm"/>
    <property type="evidence" value="ECO:0007669"/>
    <property type="project" value="UniProtKB-SubCell"/>
</dbReference>
<dbReference type="GO" id="GO:0009368">
    <property type="term" value="C:endopeptidase Clp complex"/>
    <property type="evidence" value="ECO:0007669"/>
    <property type="project" value="TreeGrafter"/>
</dbReference>
<dbReference type="GO" id="GO:0004176">
    <property type="term" value="F:ATP-dependent peptidase activity"/>
    <property type="evidence" value="ECO:0007669"/>
    <property type="project" value="InterPro"/>
</dbReference>
<dbReference type="GO" id="GO:0051117">
    <property type="term" value="F:ATPase binding"/>
    <property type="evidence" value="ECO:0007669"/>
    <property type="project" value="TreeGrafter"/>
</dbReference>
<dbReference type="GO" id="GO:0004252">
    <property type="term" value="F:serine-type endopeptidase activity"/>
    <property type="evidence" value="ECO:0007669"/>
    <property type="project" value="UniProtKB-UniRule"/>
</dbReference>
<dbReference type="GO" id="GO:0006515">
    <property type="term" value="P:protein quality control for misfolded or incompletely synthesized proteins"/>
    <property type="evidence" value="ECO:0007669"/>
    <property type="project" value="TreeGrafter"/>
</dbReference>
<dbReference type="CDD" id="cd07017">
    <property type="entry name" value="S14_ClpP_2"/>
    <property type="match status" value="1"/>
</dbReference>
<dbReference type="FunFam" id="3.90.226.10:FF:000055">
    <property type="entry name" value="ATP-dependent Clp protease proteolytic subunit"/>
    <property type="match status" value="1"/>
</dbReference>
<dbReference type="Gene3D" id="3.90.226.10">
    <property type="entry name" value="2-enoyl-CoA Hydratase, Chain A, domain 1"/>
    <property type="match status" value="1"/>
</dbReference>
<dbReference type="HAMAP" id="MF_00444">
    <property type="entry name" value="ClpP"/>
    <property type="match status" value="1"/>
</dbReference>
<dbReference type="InterPro" id="IPR001907">
    <property type="entry name" value="ClpP"/>
</dbReference>
<dbReference type="InterPro" id="IPR029045">
    <property type="entry name" value="ClpP/crotonase-like_dom_sf"/>
</dbReference>
<dbReference type="InterPro" id="IPR023562">
    <property type="entry name" value="ClpP/TepA"/>
</dbReference>
<dbReference type="InterPro" id="IPR033135">
    <property type="entry name" value="ClpP_His_AS"/>
</dbReference>
<dbReference type="NCBIfam" id="NF009205">
    <property type="entry name" value="PRK12553.1"/>
    <property type="match status" value="1"/>
</dbReference>
<dbReference type="PANTHER" id="PTHR10381">
    <property type="entry name" value="ATP-DEPENDENT CLP PROTEASE PROTEOLYTIC SUBUNIT"/>
    <property type="match status" value="1"/>
</dbReference>
<dbReference type="PANTHER" id="PTHR10381:SF11">
    <property type="entry name" value="ATP-DEPENDENT CLP PROTEASE PROTEOLYTIC SUBUNIT, MITOCHONDRIAL"/>
    <property type="match status" value="1"/>
</dbReference>
<dbReference type="Pfam" id="PF00574">
    <property type="entry name" value="CLP_protease"/>
    <property type="match status" value="1"/>
</dbReference>
<dbReference type="PRINTS" id="PR00127">
    <property type="entry name" value="CLPPROTEASEP"/>
</dbReference>
<dbReference type="SUPFAM" id="SSF52096">
    <property type="entry name" value="ClpP/crotonase"/>
    <property type="match status" value="1"/>
</dbReference>
<dbReference type="PROSITE" id="PS00382">
    <property type="entry name" value="CLP_PROTEASE_HIS"/>
    <property type="match status" value="1"/>
</dbReference>
<protein>
    <recommendedName>
        <fullName evidence="1">ATP-dependent Clp protease proteolytic subunit 1</fullName>
        <ecNumber evidence="1">3.4.21.92</ecNumber>
    </recommendedName>
    <alternativeName>
        <fullName evidence="1">Endopeptidase Clp 1</fullName>
    </alternativeName>
</protein>
<sequence>MPDGEVNKLRDVIDKKILDARRVFFSEPVTDKSAADAIKKLWYLELSHPGQPIVFVINSPGGSVDAGFAVWDQIKMMTSPVTTVVTGLAASMGSVLSLCAAPGRRFATPHSRIMIHQPSIGGPITGQATDLDIHAREILKTKKRIVDVYLEATGQPREVIEKAIDRDMWMTADEAKDFGLLDGILFSFDDL</sequence>